<dbReference type="EC" id="7.6.2.-" evidence="1"/>
<dbReference type="EMBL" id="CP000057">
    <property type="protein sequence ID" value="AAX88388.1"/>
    <property type="molecule type" value="Genomic_DNA"/>
</dbReference>
<dbReference type="RefSeq" id="WP_005693575.1">
    <property type="nucleotide sequence ID" value="NC_007146.2"/>
</dbReference>
<dbReference type="SMR" id="Q4QKQ9"/>
<dbReference type="GeneID" id="93220323"/>
<dbReference type="KEGG" id="hit:NTHI1585"/>
<dbReference type="HOGENOM" id="CLU_000604_1_22_6"/>
<dbReference type="Proteomes" id="UP000002525">
    <property type="component" value="Chromosome"/>
</dbReference>
<dbReference type="GO" id="GO:0005886">
    <property type="term" value="C:plasma membrane"/>
    <property type="evidence" value="ECO:0007669"/>
    <property type="project" value="UniProtKB-SubCell"/>
</dbReference>
<dbReference type="GO" id="GO:0005524">
    <property type="term" value="F:ATP binding"/>
    <property type="evidence" value="ECO:0007669"/>
    <property type="project" value="UniProtKB-KW"/>
</dbReference>
<dbReference type="GO" id="GO:0016887">
    <property type="term" value="F:ATP hydrolysis activity"/>
    <property type="evidence" value="ECO:0007669"/>
    <property type="project" value="InterPro"/>
</dbReference>
<dbReference type="GO" id="GO:0022857">
    <property type="term" value="F:transmembrane transporter activity"/>
    <property type="evidence" value="ECO:0007669"/>
    <property type="project" value="TreeGrafter"/>
</dbReference>
<dbReference type="GO" id="GO:0044874">
    <property type="term" value="P:lipoprotein localization to outer membrane"/>
    <property type="evidence" value="ECO:0007669"/>
    <property type="project" value="TreeGrafter"/>
</dbReference>
<dbReference type="GO" id="GO:0089705">
    <property type="term" value="P:protein localization to outer membrane"/>
    <property type="evidence" value="ECO:0007669"/>
    <property type="project" value="TreeGrafter"/>
</dbReference>
<dbReference type="CDD" id="cd03255">
    <property type="entry name" value="ABC_MJ0796_LolCDE_FtsE"/>
    <property type="match status" value="1"/>
</dbReference>
<dbReference type="FunFam" id="3.40.50.300:FF:000230">
    <property type="entry name" value="Lipoprotein-releasing system ATP-binding protein LolD"/>
    <property type="match status" value="1"/>
</dbReference>
<dbReference type="Gene3D" id="3.40.50.300">
    <property type="entry name" value="P-loop containing nucleotide triphosphate hydrolases"/>
    <property type="match status" value="1"/>
</dbReference>
<dbReference type="InterPro" id="IPR003593">
    <property type="entry name" value="AAA+_ATPase"/>
</dbReference>
<dbReference type="InterPro" id="IPR003439">
    <property type="entry name" value="ABC_transporter-like_ATP-bd"/>
</dbReference>
<dbReference type="InterPro" id="IPR017871">
    <property type="entry name" value="ABC_transporter-like_CS"/>
</dbReference>
<dbReference type="InterPro" id="IPR015854">
    <property type="entry name" value="ABC_transpr_LolD-like"/>
</dbReference>
<dbReference type="InterPro" id="IPR011924">
    <property type="entry name" value="LolD_lipo_ATP-bd"/>
</dbReference>
<dbReference type="InterPro" id="IPR017911">
    <property type="entry name" value="MacB-like_ATP-bd"/>
</dbReference>
<dbReference type="InterPro" id="IPR027417">
    <property type="entry name" value="P-loop_NTPase"/>
</dbReference>
<dbReference type="NCBIfam" id="TIGR02211">
    <property type="entry name" value="LolD_lipo_ex"/>
    <property type="match status" value="1"/>
</dbReference>
<dbReference type="PANTHER" id="PTHR24220">
    <property type="entry name" value="IMPORT ATP-BINDING PROTEIN"/>
    <property type="match status" value="1"/>
</dbReference>
<dbReference type="PANTHER" id="PTHR24220:SF689">
    <property type="entry name" value="LIPOPROTEIN-RELEASING SYSTEM ATP-BINDING PROTEIN LOLD"/>
    <property type="match status" value="1"/>
</dbReference>
<dbReference type="Pfam" id="PF00005">
    <property type="entry name" value="ABC_tran"/>
    <property type="match status" value="1"/>
</dbReference>
<dbReference type="SMART" id="SM00382">
    <property type="entry name" value="AAA"/>
    <property type="match status" value="1"/>
</dbReference>
<dbReference type="SUPFAM" id="SSF52540">
    <property type="entry name" value="P-loop containing nucleoside triphosphate hydrolases"/>
    <property type="match status" value="1"/>
</dbReference>
<dbReference type="PROSITE" id="PS00211">
    <property type="entry name" value="ABC_TRANSPORTER_1"/>
    <property type="match status" value="1"/>
</dbReference>
<dbReference type="PROSITE" id="PS50893">
    <property type="entry name" value="ABC_TRANSPORTER_2"/>
    <property type="match status" value="1"/>
</dbReference>
<dbReference type="PROSITE" id="PS51244">
    <property type="entry name" value="LOLD"/>
    <property type="match status" value="1"/>
</dbReference>
<accession>Q4QKQ9</accession>
<comment type="function">
    <text evidence="1">Part of the ABC transporter complex LolCDE involved in the translocation of mature outer membrane-directed lipoproteins, from the inner membrane to the periplasmic chaperone, LolA. Responsible for the formation of the LolA-lipoprotein complex in an ATP-dependent manner.</text>
</comment>
<comment type="subunit">
    <text evidence="1">The complex is composed of two ATP-binding proteins (LolD) and two transmembrane proteins (LolC and LolE).</text>
</comment>
<comment type="subcellular location">
    <subcellularLocation>
        <location evidence="1">Cell inner membrane</location>
        <topology evidence="1">Peripheral membrane protein</topology>
    </subcellularLocation>
</comment>
<comment type="similarity">
    <text evidence="1">Belongs to the ABC transporter superfamily. Lipoprotein translocase (TC 3.A.1.125) family.</text>
</comment>
<proteinExistence type="inferred from homology"/>
<keyword id="KW-0067">ATP-binding</keyword>
<keyword id="KW-0997">Cell inner membrane</keyword>
<keyword id="KW-1003">Cell membrane</keyword>
<keyword id="KW-0472">Membrane</keyword>
<keyword id="KW-0547">Nucleotide-binding</keyword>
<keyword id="KW-1278">Translocase</keyword>
<keyword id="KW-0813">Transport</keyword>
<protein>
    <recommendedName>
        <fullName evidence="1">Lipoprotein-releasing system ATP-binding protein LolD</fullName>
        <ecNumber evidence="1">7.6.2.-</ecNumber>
    </recommendedName>
</protein>
<organism>
    <name type="scientific">Haemophilus influenzae (strain 86-028NP)</name>
    <dbReference type="NCBI Taxonomy" id="281310"/>
    <lineage>
        <taxon>Bacteria</taxon>
        <taxon>Pseudomonadati</taxon>
        <taxon>Pseudomonadota</taxon>
        <taxon>Gammaproteobacteria</taxon>
        <taxon>Pasteurellales</taxon>
        <taxon>Pasteurellaceae</taxon>
        <taxon>Haemophilus</taxon>
    </lineage>
</organism>
<sequence length="227" mass="24974">MNNYLLKCENINKFYQEGENQTQVLKGVSFSMEPAELVAIVGSSGSGKSTLLHTLGGLDQPSSGEVFINGQSLQKASANELAALRNRYLGFVYQFHHLMADFTALENVMMPMLIGHQNKTEAKDRAEKMLSAVGLSHRITHRPSALSGGERQRVAIARALVNNPSLVLADEPTGNLDHKTTESIFELIQQLNQEQNIAFLLVTHDMGLAEKLSRRLVMQDGLLKEGA</sequence>
<feature type="chain" id="PRO_0000272093" description="Lipoprotein-releasing system ATP-binding protein LolD">
    <location>
        <begin position="1"/>
        <end position="227"/>
    </location>
</feature>
<feature type="domain" description="ABC transporter" evidence="1">
    <location>
        <begin position="6"/>
        <end position="227"/>
    </location>
</feature>
<feature type="binding site" evidence="1">
    <location>
        <begin position="42"/>
        <end position="49"/>
    </location>
    <ligand>
        <name>ATP</name>
        <dbReference type="ChEBI" id="CHEBI:30616"/>
    </ligand>
</feature>
<reference key="1">
    <citation type="journal article" date="2005" name="J. Bacteriol.">
        <title>Genomic sequence of an otitis media isolate of nontypeable Haemophilus influenzae: comparative study with H. influenzae serotype d, strain KW20.</title>
        <authorList>
            <person name="Harrison A."/>
            <person name="Dyer D.W."/>
            <person name="Gillaspy A."/>
            <person name="Ray W.C."/>
            <person name="Mungur R."/>
            <person name="Carson M.B."/>
            <person name="Zhong H."/>
            <person name="Gipson J."/>
            <person name="Gipson M."/>
            <person name="Johnson L.S."/>
            <person name="Lewis L."/>
            <person name="Bakaletz L.O."/>
            <person name="Munson R.S. Jr."/>
        </authorList>
    </citation>
    <scope>NUCLEOTIDE SEQUENCE [LARGE SCALE GENOMIC DNA]</scope>
    <source>
        <strain>86-028NP</strain>
    </source>
</reference>
<gene>
    <name evidence="1" type="primary">lolD</name>
    <name type="ordered locus">NTHI1585</name>
</gene>
<name>LOLD_HAEI8</name>
<evidence type="ECO:0000255" key="1">
    <source>
        <dbReference type="HAMAP-Rule" id="MF_01708"/>
    </source>
</evidence>